<proteinExistence type="evidence at transcript level"/>
<evidence type="ECO:0000250" key="1">
    <source>
        <dbReference type="UniProtKB" id="Q9GZT6"/>
    </source>
</evidence>
<evidence type="ECO:0000255" key="2"/>
<evidence type="ECO:0000305" key="3"/>
<feature type="transit peptide" description="Mitochondrion" evidence="2">
    <location>
        <begin position="1"/>
        <end position="42"/>
    </location>
</feature>
<feature type="chain" id="PRO_0000295697" description="Coiled-coil domain-containing protein 90B, mitochondrial">
    <location>
        <begin position="43"/>
        <end position="256"/>
    </location>
</feature>
<feature type="transmembrane region" description="Helical" evidence="2">
    <location>
        <begin position="231"/>
        <end position="253"/>
    </location>
</feature>
<feature type="coiled-coil region" evidence="2">
    <location>
        <begin position="106"/>
        <end position="164"/>
    </location>
</feature>
<sequence>MRNRWIWRFLRPECSGIRWISSPHGRLSPALRRGFLTTTTKSDYDRRPVEITPLEQRKLTFDTHALVQDLETHGFDKGQAQTIVSVLSTLSNVSLDTVYKEMVTKAQQEITIQQLMAHLDSIRKDMVILEKSEFANLRAENEKMKIELDQVKQQLINETSRIRADNRLDINLERSRVTDMFTDQEKQLMEATNEFTKKDMQTKSIISETSNKIDTEIASLKTLMESSKLETIRYLAASVFTCLAIALGFYRFWKEN</sequence>
<comment type="subunit">
    <text evidence="1">Interacts with MCU.</text>
</comment>
<comment type="subcellular location">
    <subcellularLocation>
        <location evidence="1">Mitochondrion membrane</location>
        <topology evidence="2">Single-pass membrane protein</topology>
    </subcellularLocation>
</comment>
<comment type="similarity">
    <text evidence="3">Belongs to the CCDC90 family.</text>
</comment>
<reference key="1">
    <citation type="journal article" date="2004" name="Genome Res.">
        <title>The status, quality, and expansion of the NIH full-length cDNA project: the Mammalian Gene Collection (MGC).</title>
        <authorList>
            <consortium name="The MGC Project Team"/>
        </authorList>
    </citation>
    <scope>NUCLEOTIDE SEQUENCE [LARGE SCALE MRNA]</scope>
    <source>
        <tissue>Placenta</tissue>
    </source>
</reference>
<keyword id="KW-0175">Coiled coil</keyword>
<keyword id="KW-0472">Membrane</keyword>
<keyword id="KW-0496">Mitochondrion</keyword>
<keyword id="KW-1185">Reference proteome</keyword>
<keyword id="KW-0809">Transit peptide</keyword>
<keyword id="KW-0812">Transmembrane</keyword>
<keyword id="KW-1133">Transmembrane helix</keyword>
<dbReference type="EMBL" id="BC097480">
    <property type="protein sequence ID" value="AAH97480.1"/>
    <property type="molecule type" value="mRNA"/>
</dbReference>
<dbReference type="RefSeq" id="NP_001020056.1">
    <property type="nucleotide sequence ID" value="NM_001024885.1"/>
</dbReference>
<dbReference type="SMR" id="Q4V897"/>
<dbReference type="FunCoup" id="Q4V897">
    <property type="interactions" value="2858"/>
</dbReference>
<dbReference type="STRING" id="10116.ENSRNOP00000012781"/>
<dbReference type="PhosphoSitePlus" id="Q4V897"/>
<dbReference type="PaxDb" id="10116-ENSRNOP00000012781"/>
<dbReference type="Ensembl" id="ENSRNOT00000012781.7">
    <property type="protein sequence ID" value="ENSRNOP00000012781.4"/>
    <property type="gene ID" value="ENSRNOG00000009462.7"/>
</dbReference>
<dbReference type="GeneID" id="308820"/>
<dbReference type="KEGG" id="rno:308820"/>
<dbReference type="UCSC" id="RGD:1308637">
    <property type="organism name" value="rat"/>
</dbReference>
<dbReference type="AGR" id="RGD:1308637"/>
<dbReference type="CTD" id="60492"/>
<dbReference type="RGD" id="1308637">
    <property type="gene designation" value="Ccdc90b"/>
</dbReference>
<dbReference type="eggNOG" id="KOG3156">
    <property type="taxonomic scope" value="Eukaryota"/>
</dbReference>
<dbReference type="GeneTree" id="ENSGT00940000155453"/>
<dbReference type="HOGENOM" id="CLU_063283_1_0_1"/>
<dbReference type="InParanoid" id="Q4V897"/>
<dbReference type="OMA" id="MAYMRFR"/>
<dbReference type="OrthoDB" id="45995at9989"/>
<dbReference type="PhylomeDB" id="Q4V897"/>
<dbReference type="TreeFam" id="TF331442"/>
<dbReference type="PRO" id="PR:Q4V897"/>
<dbReference type="Proteomes" id="UP000002494">
    <property type="component" value="Chromosome 1"/>
</dbReference>
<dbReference type="Bgee" id="ENSRNOG00000009462">
    <property type="expression patterns" value="Expressed in duodenum and 20 other cell types or tissues"/>
</dbReference>
<dbReference type="GO" id="GO:0031966">
    <property type="term" value="C:mitochondrial membrane"/>
    <property type="evidence" value="ECO:0007669"/>
    <property type="project" value="UniProtKB-SubCell"/>
</dbReference>
<dbReference type="GO" id="GO:0005739">
    <property type="term" value="C:mitochondrion"/>
    <property type="evidence" value="ECO:0000318"/>
    <property type="project" value="GO_Central"/>
</dbReference>
<dbReference type="FunFam" id="1.20.5.340:FF:000015">
    <property type="entry name" value="Mitochondrial calcium uniporter regulator 1"/>
    <property type="match status" value="1"/>
</dbReference>
<dbReference type="Gene3D" id="1.20.5.340">
    <property type="match status" value="1"/>
</dbReference>
<dbReference type="InterPro" id="IPR024461">
    <property type="entry name" value="CCDC90-like"/>
</dbReference>
<dbReference type="PANTHER" id="PTHR14360:SF14">
    <property type="entry name" value="COILED-COIL DOMAIN-CONTAINING PROTEIN 90B, MITOCHONDRIAL"/>
    <property type="match status" value="1"/>
</dbReference>
<dbReference type="PANTHER" id="PTHR14360">
    <property type="entry name" value="PROTEIN FMP32, MITOCHONDRIAL"/>
    <property type="match status" value="1"/>
</dbReference>
<dbReference type="Pfam" id="PF07798">
    <property type="entry name" value="CCDC90-like"/>
    <property type="match status" value="1"/>
</dbReference>
<accession>Q4V897</accession>
<protein>
    <recommendedName>
        <fullName>Coiled-coil domain-containing protein 90B, mitochondrial</fullName>
    </recommendedName>
</protein>
<gene>
    <name type="primary">Ccdc90b</name>
</gene>
<name>CC90B_RAT</name>
<organism>
    <name type="scientific">Rattus norvegicus</name>
    <name type="common">Rat</name>
    <dbReference type="NCBI Taxonomy" id="10116"/>
    <lineage>
        <taxon>Eukaryota</taxon>
        <taxon>Metazoa</taxon>
        <taxon>Chordata</taxon>
        <taxon>Craniata</taxon>
        <taxon>Vertebrata</taxon>
        <taxon>Euteleostomi</taxon>
        <taxon>Mammalia</taxon>
        <taxon>Eutheria</taxon>
        <taxon>Euarchontoglires</taxon>
        <taxon>Glires</taxon>
        <taxon>Rodentia</taxon>
        <taxon>Myomorpha</taxon>
        <taxon>Muroidea</taxon>
        <taxon>Muridae</taxon>
        <taxon>Murinae</taxon>
        <taxon>Rattus</taxon>
    </lineage>
</organism>